<reference key="1">
    <citation type="journal article" date="2011" name="Appl. Environ. Microbiol.">
        <title>Genomic potential of Marinobacter aquaeolei, a biogeochemical 'opportunitroph'.</title>
        <authorList>
            <person name="Singer E."/>
            <person name="Webb E.A."/>
            <person name="Nelson W.C."/>
            <person name="Heidelberg J.F."/>
            <person name="Ivanova N."/>
            <person name="Pati A."/>
            <person name="Edwards K.J."/>
        </authorList>
    </citation>
    <scope>NUCLEOTIDE SEQUENCE [LARGE SCALE GENOMIC DNA]</scope>
    <source>
        <strain>ATCC 700491 / DSM 11845 / VT8</strain>
    </source>
</reference>
<accession>A1U6U9</accession>
<sequence>MKLLIRPAPEVAIKSKPVRQQQMRQLRQNIRKLLARLDPEIRVDGSWDRVDVDVPDGRSLAGPVIDELVRIPGISTIQEIGVFPFVDLDDVGEKAVQAYAERLKGKTFAVRARRHGDHDFRSIDLERSVGAALLQGSDAKGVDLKSPDLEVRIEVKDDSYHIAHRRHEGLGGYPLGTVETVMTLISGGYDSSVAAYLMMRRGIRSHYLFFNLGGAAHEVGVRQVAHYLWERYGSSHNVKFISVPFEGVVAEIMRSVNHRHWGVVLKRMMLKAAAEIARDYNASGLVMGDAVAQVSSQTLTNLNVVDRASDEVVLRPLIAMDKQEIIRIAKDIGTEPFARNMPEYCGVISSKPVTRARLHRVEEDEANMDPAALADAIANRTDTMVSQLLDSTQTPEEVELIQTPSVDDVIIDVRHPSEEERSPLTLTNNDVLKIPFYELNQQVAELPGNRQYLLYCDRGTMSRMHAGHLKAEGHGNIKVYAPAV</sequence>
<evidence type="ECO:0000255" key="1">
    <source>
        <dbReference type="HAMAP-Rule" id="MF_00021"/>
    </source>
</evidence>
<gene>
    <name evidence="1" type="primary">thiI</name>
    <name type="ordered locus">Maqu_3649</name>
</gene>
<protein>
    <recommendedName>
        <fullName evidence="1">tRNA sulfurtransferase</fullName>
        <ecNumber evidence="1">2.8.1.4</ecNumber>
    </recommendedName>
    <alternativeName>
        <fullName evidence="1">Sulfur carrier protein ThiS sulfurtransferase</fullName>
    </alternativeName>
    <alternativeName>
        <fullName evidence="1">Thiamine biosynthesis protein ThiI</fullName>
    </alternativeName>
    <alternativeName>
        <fullName evidence="1">tRNA 4-thiouridine synthase</fullName>
    </alternativeName>
</protein>
<name>THII_MARN8</name>
<comment type="function">
    <text evidence="1">Catalyzes the ATP-dependent transfer of a sulfur to tRNA to produce 4-thiouridine in position 8 of tRNAs, which functions as a near-UV photosensor. Also catalyzes the transfer of sulfur to the sulfur carrier protein ThiS, forming ThiS-thiocarboxylate. This is a step in the synthesis of thiazole, in the thiamine biosynthesis pathway. The sulfur is donated as persulfide by IscS.</text>
</comment>
<comment type="catalytic activity">
    <reaction evidence="1">
        <text>[ThiI sulfur-carrier protein]-S-sulfanyl-L-cysteine + a uridine in tRNA + 2 reduced [2Fe-2S]-[ferredoxin] + ATP + H(+) = [ThiI sulfur-carrier protein]-L-cysteine + a 4-thiouridine in tRNA + 2 oxidized [2Fe-2S]-[ferredoxin] + AMP + diphosphate</text>
        <dbReference type="Rhea" id="RHEA:24176"/>
        <dbReference type="Rhea" id="RHEA-COMP:10000"/>
        <dbReference type="Rhea" id="RHEA-COMP:10001"/>
        <dbReference type="Rhea" id="RHEA-COMP:13337"/>
        <dbReference type="Rhea" id="RHEA-COMP:13338"/>
        <dbReference type="Rhea" id="RHEA-COMP:13339"/>
        <dbReference type="Rhea" id="RHEA-COMP:13340"/>
        <dbReference type="ChEBI" id="CHEBI:15378"/>
        <dbReference type="ChEBI" id="CHEBI:29950"/>
        <dbReference type="ChEBI" id="CHEBI:30616"/>
        <dbReference type="ChEBI" id="CHEBI:33019"/>
        <dbReference type="ChEBI" id="CHEBI:33737"/>
        <dbReference type="ChEBI" id="CHEBI:33738"/>
        <dbReference type="ChEBI" id="CHEBI:61963"/>
        <dbReference type="ChEBI" id="CHEBI:65315"/>
        <dbReference type="ChEBI" id="CHEBI:136798"/>
        <dbReference type="ChEBI" id="CHEBI:456215"/>
        <dbReference type="EC" id="2.8.1.4"/>
    </reaction>
</comment>
<comment type="catalytic activity">
    <reaction evidence="1">
        <text>[ThiS sulfur-carrier protein]-C-terminal Gly-Gly-AMP + S-sulfanyl-L-cysteinyl-[cysteine desulfurase] + AH2 = [ThiS sulfur-carrier protein]-C-terminal-Gly-aminoethanethioate + L-cysteinyl-[cysteine desulfurase] + A + AMP + 2 H(+)</text>
        <dbReference type="Rhea" id="RHEA:43340"/>
        <dbReference type="Rhea" id="RHEA-COMP:12157"/>
        <dbReference type="Rhea" id="RHEA-COMP:12158"/>
        <dbReference type="Rhea" id="RHEA-COMP:12910"/>
        <dbReference type="Rhea" id="RHEA-COMP:19908"/>
        <dbReference type="ChEBI" id="CHEBI:13193"/>
        <dbReference type="ChEBI" id="CHEBI:15378"/>
        <dbReference type="ChEBI" id="CHEBI:17499"/>
        <dbReference type="ChEBI" id="CHEBI:29950"/>
        <dbReference type="ChEBI" id="CHEBI:61963"/>
        <dbReference type="ChEBI" id="CHEBI:90618"/>
        <dbReference type="ChEBI" id="CHEBI:232372"/>
        <dbReference type="ChEBI" id="CHEBI:456215"/>
    </reaction>
</comment>
<comment type="pathway">
    <text evidence="1">Cofactor biosynthesis; thiamine diphosphate biosynthesis.</text>
</comment>
<comment type="subcellular location">
    <subcellularLocation>
        <location evidence="1">Cytoplasm</location>
    </subcellularLocation>
</comment>
<comment type="similarity">
    <text evidence="1">Belongs to the ThiI family.</text>
</comment>
<dbReference type="EC" id="2.8.1.4" evidence="1"/>
<dbReference type="EMBL" id="CP000514">
    <property type="protein sequence ID" value="ABM20718.1"/>
    <property type="molecule type" value="Genomic_DNA"/>
</dbReference>
<dbReference type="RefSeq" id="WP_011787056.1">
    <property type="nucleotide sequence ID" value="NC_008740.1"/>
</dbReference>
<dbReference type="SMR" id="A1U6U9"/>
<dbReference type="STRING" id="351348.Maqu_3649"/>
<dbReference type="KEGG" id="maq:Maqu_3649"/>
<dbReference type="eggNOG" id="COG0301">
    <property type="taxonomic scope" value="Bacteria"/>
</dbReference>
<dbReference type="eggNOG" id="COG0607">
    <property type="taxonomic scope" value="Bacteria"/>
</dbReference>
<dbReference type="HOGENOM" id="CLU_037952_4_1_6"/>
<dbReference type="OrthoDB" id="9773948at2"/>
<dbReference type="UniPathway" id="UPA00060"/>
<dbReference type="Proteomes" id="UP000000998">
    <property type="component" value="Chromosome"/>
</dbReference>
<dbReference type="GO" id="GO:0005829">
    <property type="term" value="C:cytosol"/>
    <property type="evidence" value="ECO:0007669"/>
    <property type="project" value="TreeGrafter"/>
</dbReference>
<dbReference type="GO" id="GO:0005524">
    <property type="term" value="F:ATP binding"/>
    <property type="evidence" value="ECO:0007669"/>
    <property type="project" value="UniProtKB-UniRule"/>
</dbReference>
<dbReference type="GO" id="GO:0004810">
    <property type="term" value="F:CCA tRNA nucleotidyltransferase activity"/>
    <property type="evidence" value="ECO:0007669"/>
    <property type="project" value="InterPro"/>
</dbReference>
<dbReference type="GO" id="GO:0000049">
    <property type="term" value="F:tRNA binding"/>
    <property type="evidence" value="ECO:0007669"/>
    <property type="project" value="UniProtKB-UniRule"/>
</dbReference>
<dbReference type="GO" id="GO:0140741">
    <property type="term" value="F:tRNA-uracil-4 sulfurtransferase activity"/>
    <property type="evidence" value="ECO:0007669"/>
    <property type="project" value="UniProtKB-EC"/>
</dbReference>
<dbReference type="GO" id="GO:0009228">
    <property type="term" value="P:thiamine biosynthetic process"/>
    <property type="evidence" value="ECO:0007669"/>
    <property type="project" value="UniProtKB-KW"/>
</dbReference>
<dbReference type="GO" id="GO:0009229">
    <property type="term" value="P:thiamine diphosphate biosynthetic process"/>
    <property type="evidence" value="ECO:0007669"/>
    <property type="project" value="UniProtKB-UniRule"/>
</dbReference>
<dbReference type="GO" id="GO:0052837">
    <property type="term" value="P:thiazole biosynthetic process"/>
    <property type="evidence" value="ECO:0007669"/>
    <property type="project" value="InterPro"/>
</dbReference>
<dbReference type="GO" id="GO:0002937">
    <property type="term" value="P:tRNA 4-thiouridine biosynthesis"/>
    <property type="evidence" value="ECO:0007669"/>
    <property type="project" value="TreeGrafter"/>
</dbReference>
<dbReference type="CDD" id="cd01712">
    <property type="entry name" value="PPase_ThiI"/>
    <property type="match status" value="1"/>
</dbReference>
<dbReference type="CDD" id="cd11716">
    <property type="entry name" value="THUMP_ThiI"/>
    <property type="match status" value="1"/>
</dbReference>
<dbReference type="Gene3D" id="3.30.2130.30">
    <property type="match status" value="1"/>
</dbReference>
<dbReference type="Gene3D" id="3.40.50.620">
    <property type="entry name" value="HUPs"/>
    <property type="match status" value="1"/>
</dbReference>
<dbReference type="Gene3D" id="3.40.250.10">
    <property type="entry name" value="Rhodanese-like domain"/>
    <property type="match status" value="1"/>
</dbReference>
<dbReference type="HAMAP" id="MF_00021">
    <property type="entry name" value="ThiI"/>
    <property type="match status" value="1"/>
</dbReference>
<dbReference type="InterPro" id="IPR001763">
    <property type="entry name" value="Rhodanese-like_dom"/>
</dbReference>
<dbReference type="InterPro" id="IPR036873">
    <property type="entry name" value="Rhodanese-like_dom_sf"/>
</dbReference>
<dbReference type="InterPro" id="IPR014729">
    <property type="entry name" value="Rossmann-like_a/b/a_fold"/>
</dbReference>
<dbReference type="InterPro" id="IPR020536">
    <property type="entry name" value="ThiI_AANH"/>
</dbReference>
<dbReference type="InterPro" id="IPR054173">
    <property type="entry name" value="ThiI_fer"/>
</dbReference>
<dbReference type="InterPro" id="IPR049961">
    <property type="entry name" value="ThiI_N"/>
</dbReference>
<dbReference type="InterPro" id="IPR026340">
    <property type="entry name" value="THII_Thiazole_biosynth_dom"/>
</dbReference>
<dbReference type="InterPro" id="IPR004114">
    <property type="entry name" value="THUMP_dom"/>
</dbReference>
<dbReference type="InterPro" id="IPR049962">
    <property type="entry name" value="THUMP_ThiI"/>
</dbReference>
<dbReference type="InterPro" id="IPR003720">
    <property type="entry name" value="tRNA_STrfase"/>
</dbReference>
<dbReference type="InterPro" id="IPR050102">
    <property type="entry name" value="tRNA_sulfurtransferase_ThiI"/>
</dbReference>
<dbReference type="NCBIfam" id="TIGR04271">
    <property type="entry name" value="ThiI_C_thiazole"/>
    <property type="match status" value="1"/>
</dbReference>
<dbReference type="NCBIfam" id="TIGR00342">
    <property type="entry name" value="tRNA uracil 4-sulfurtransferase ThiI"/>
    <property type="match status" value="1"/>
</dbReference>
<dbReference type="PANTHER" id="PTHR43209">
    <property type="entry name" value="TRNA SULFURTRANSFERASE"/>
    <property type="match status" value="1"/>
</dbReference>
<dbReference type="PANTHER" id="PTHR43209:SF1">
    <property type="entry name" value="TRNA SULFURTRANSFERASE"/>
    <property type="match status" value="1"/>
</dbReference>
<dbReference type="Pfam" id="PF00581">
    <property type="entry name" value="Rhodanese"/>
    <property type="match status" value="1"/>
</dbReference>
<dbReference type="Pfam" id="PF02568">
    <property type="entry name" value="ThiI"/>
    <property type="match status" value="1"/>
</dbReference>
<dbReference type="Pfam" id="PF22025">
    <property type="entry name" value="ThiI_fer"/>
    <property type="match status" value="1"/>
</dbReference>
<dbReference type="Pfam" id="PF02926">
    <property type="entry name" value="THUMP"/>
    <property type="match status" value="1"/>
</dbReference>
<dbReference type="SMART" id="SM00981">
    <property type="entry name" value="THUMP"/>
    <property type="match status" value="1"/>
</dbReference>
<dbReference type="SUPFAM" id="SSF52402">
    <property type="entry name" value="Adenine nucleotide alpha hydrolases-like"/>
    <property type="match status" value="1"/>
</dbReference>
<dbReference type="SUPFAM" id="SSF52821">
    <property type="entry name" value="Rhodanese/Cell cycle control phosphatase"/>
    <property type="match status" value="1"/>
</dbReference>
<dbReference type="SUPFAM" id="SSF143437">
    <property type="entry name" value="THUMP domain-like"/>
    <property type="match status" value="1"/>
</dbReference>
<dbReference type="PROSITE" id="PS50206">
    <property type="entry name" value="RHODANESE_3"/>
    <property type="match status" value="1"/>
</dbReference>
<dbReference type="PROSITE" id="PS51165">
    <property type="entry name" value="THUMP"/>
    <property type="match status" value="1"/>
</dbReference>
<organism>
    <name type="scientific">Marinobacter nauticus (strain ATCC 700491 / DSM 11845 / VT8)</name>
    <name type="common">Marinobacter aquaeolei</name>
    <dbReference type="NCBI Taxonomy" id="351348"/>
    <lineage>
        <taxon>Bacteria</taxon>
        <taxon>Pseudomonadati</taxon>
        <taxon>Pseudomonadota</taxon>
        <taxon>Gammaproteobacteria</taxon>
        <taxon>Pseudomonadales</taxon>
        <taxon>Marinobacteraceae</taxon>
        <taxon>Marinobacter</taxon>
    </lineage>
</organism>
<keyword id="KW-0067">ATP-binding</keyword>
<keyword id="KW-0963">Cytoplasm</keyword>
<keyword id="KW-1015">Disulfide bond</keyword>
<keyword id="KW-0547">Nucleotide-binding</keyword>
<keyword id="KW-0676">Redox-active center</keyword>
<keyword id="KW-0694">RNA-binding</keyword>
<keyword id="KW-0784">Thiamine biosynthesis</keyword>
<keyword id="KW-0808">Transferase</keyword>
<keyword id="KW-0820">tRNA-binding</keyword>
<proteinExistence type="inferred from homology"/>
<feature type="chain" id="PRO_1000074244" description="tRNA sulfurtransferase">
    <location>
        <begin position="1"/>
        <end position="484"/>
    </location>
</feature>
<feature type="domain" description="THUMP" evidence="1">
    <location>
        <begin position="62"/>
        <end position="166"/>
    </location>
</feature>
<feature type="domain" description="Rhodanese" evidence="1">
    <location>
        <begin position="404"/>
        <end position="482"/>
    </location>
</feature>
<feature type="active site" description="Cysteine persulfide intermediate" evidence="1">
    <location>
        <position position="456"/>
    </location>
</feature>
<feature type="binding site" evidence="1">
    <location>
        <begin position="184"/>
        <end position="185"/>
    </location>
    <ligand>
        <name>ATP</name>
        <dbReference type="ChEBI" id="CHEBI:30616"/>
    </ligand>
</feature>
<feature type="binding site" evidence="1">
    <location>
        <position position="266"/>
    </location>
    <ligand>
        <name>ATP</name>
        <dbReference type="ChEBI" id="CHEBI:30616"/>
    </ligand>
</feature>
<feature type="binding site" evidence="1">
    <location>
        <position position="288"/>
    </location>
    <ligand>
        <name>ATP</name>
        <dbReference type="ChEBI" id="CHEBI:30616"/>
    </ligand>
</feature>
<feature type="binding site" evidence="1">
    <location>
        <position position="297"/>
    </location>
    <ligand>
        <name>ATP</name>
        <dbReference type="ChEBI" id="CHEBI:30616"/>
    </ligand>
</feature>
<feature type="disulfide bond" description="Redox-active" evidence="1">
    <location>
        <begin position="345"/>
        <end position="456"/>
    </location>
</feature>